<evidence type="ECO:0000255" key="1">
    <source>
        <dbReference type="HAMAP-Rule" id="MF_00270"/>
    </source>
</evidence>
<evidence type="ECO:0000305" key="2"/>
<organism>
    <name type="scientific">Bacillus anthracis</name>
    <dbReference type="NCBI Taxonomy" id="1392"/>
    <lineage>
        <taxon>Bacteria</taxon>
        <taxon>Bacillati</taxon>
        <taxon>Bacillota</taxon>
        <taxon>Bacilli</taxon>
        <taxon>Bacillales</taxon>
        <taxon>Bacillaceae</taxon>
        <taxon>Bacillus</taxon>
        <taxon>Bacillus cereus group</taxon>
    </lineage>
</organism>
<feature type="chain" id="PRO_0000111108" description="Small ribosomal subunit protein bS18">
    <location>
        <begin position="1"/>
        <end position="77"/>
    </location>
</feature>
<proteinExistence type="inferred from homology"/>
<name>RS18_BACAN</name>
<dbReference type="EMBL" id="AE016879">
    <property type="protein sequence ID" value="AAP29353.1"/>
    <property type="molecule type" value="Genomic_DNA"/>
</dbReference>
<dbReference type="EMBL" id="AE017334">
    <property type="protein sequence ID" value="AAT34882.1"/>
    <property type="molecule type" value="Genomic_DNA"/>
</dbReference>
<dbReference type="EMBL" id="AE017225">
    <property type="protein sequence ID" value="AAT57612.1"/>
    <property type="molecule type" value="Genomic_DNA"/>
</dbReference>
<dbReference type="RefSeq" id="NP_847867.1">
    <property type="nucleotide sequence ID" value="NC_003997.3"/>
</dbReference>
<dbReference type="RefSeq" id="WP_000918874.1">
    <property type="nucleotide sequence ID" value="NZ_WXXJ01000028.1"/>
</dbReference>
<dbReference type="RefSeq" id="YP_031562.1">
    <property type="nucleotide sequence ID" value="NC_005945.1"/>
</dbReference>
<dbReference type="SMR" id="Q81JI4"/>
<dbReference type="STRING" id="261594.GBAA_5721"/>
<dbReference type="DNASU" id="1085488"/>
<dbReference type="GeneID" id="92885945"/>
<dbReference type="KEGG" id="ban:BA_5721"/>
<dbReference type="KEGG" id="bar:GBAA_5721"/>
<dbReference type="KEGG" id="bat:BAS5325"/>
<dbReference type="PATRIC" id="fig|198094.11.peg.5683"/>
<dbReference type="eggNOG" id="COG0238">
    <property type="taxonomic scope" value="Bacteria"/>
</dbReference>
<dbReference type="HOGENOM" id="CLU_148710_2_2_9"/>
<dbReference type="OMA" id="QKKYCRF"/>
<dbReference type="OrthoDB" id="9812008at2"/>
<dbReference type="Proteomes" id="UP000000427">
    <property type="component" value="Chromosome"/>
</dbReference>
<dbReference type="Proteomes" id="UP000000594">
    <property type="component" value="Chromosome"/>
</dbReference>
<dbReference type="GO" id="GO:0022627">
    <property type="term" value="C:cytosolic small ribosomal subunit"/>
    <property type="evidence" value="ECO:0007669"/>
    <property type="project" value="TreeGrafter"/>
</dbReference>
<dbReference type="GO" id="GO:0070181">
    <property type="term" value="F:small ribosomal subunit rRNA binding"/>
    <property type="evidence" value="ECO:0007669"/>
    <property type="project" value="TreeGrafter"/>
</dbReference>
<dbReference type="GO" id="GO:0003735">
    <property type="term" value="F:structural constituent of ribosome"/>
    <property type="evidence" value="ECO:0007669"/>
    <property type="project" value="InterPro"/>
</dbReference>
<dbReference type="GO" id="GO:0006412">
    <property type="term" value="P:translation"/>
    <property type="evidence" value="ECO:0007669"/>
    <property type="project" value="UniProtKB-UniRule"/>
</dbReference>
<dbReference type="FunFam" id="4.10.640.10:FF:000003">
    <property type="entry name" value="30S ribosomal protein S18"/>
    <property type="match status" value="1"/>
</dbReference>
<dbReference type="Gene3D" id="4.10.640.10">
    <property type="entry name" value="Ribosomal protein S18"/>
    <property type="match status" value="1"/>
</dbReference>
<dbReference type="HAMAP" id="MF_00270">
    <property type="entry name" value="Ribosomal_bS18"/>
    <property type="match status" value="1"/>
</dbReference>
<dbReference type="InterPro" id="IPR001648">
    <property type="entry name" value="Ribosomal_bS18"/>
</dbReference>
<dbReference type="InterPro" id="IPR018275">
    <property type="entry name" value="Ribosomal_bS18_CS"/>
</dbReference>
<dbReference type="InterPro" id="IPR036870">
    <property type="entry name" value="Ribosomal_bS18_sf"/>
</dbReference>
<dbReference type="NCBIfam" id="TIGR00165">
    <property type="entry name" value="S18"/>
    <property type="match status" value="1"/>
</dbReference>
<dbReference type="PANTHER" id="PTHR13479">
    <property type="entry name" value="30S RIBOSOMAL PROTEIN S18"/>
    <property type="match status" value="1"/>
</dbReference>
<dbReference type="PANTHER" id="PTHR13479:SF40">
    <property type="entry name" value="SMALL RIBOSOMAL SUBUNIT PROTEIN BS18M"/>
    <property type="match status" value="1"/>
</dbReference>
<dbReference type="Pfam" id="PF01084">
    <property type="entry name" value="Ribosomal_S18"/>
    <property type="match status" value="1"/>
</dbReference>
<dbReference type="PRINTS" id="PR00974">
    <property type="entry name" value="RIBOSOMALS18"/>
</dbReference>
<dbReference type="SUPFAM" id="SSF46911">
    <property type="entry name" value="Ribosomal protein S18"/>
    <property type="match status" value="1"/>
</dbReference>
<dbReference type="PROSITE" id="PS00057">
    <property type="entry name" value="RIBOSOMAL_S18"/>
    <property type="match status" value="1"/>
</dbReference>
<keyword id="KW-1185">Reference proteome</keyword>
<keyword id="KW-0687">Ribonucleoprotein</keyword>
<keyword id="KW-0689">Ribosomal protein</keyword>
<keyword id="KW-0694">RNA-binding</keyword>
<keyword id="KW-0699">rRNA-binding</keyword>
<gene>
    <name evidence="1" type="primary">rpsR</name>
    <name type="ordered locus">BA_5721</name>
    <name type="ordered locus">GBAA_5721</name>
    <name type="ordered locus">BAS5325</name>
</gene>
<accession>Q81JI4</accession>
<accession>Q6HQ26</accession>
<accession>Q6KJH0</accession>
<comment type="function">
    <text evidence="1">Binds as a heterodimer with protein bS6 to the central domain of the 16S rRNA, where it helps stabilize the platform of the 30S subunit.</text>
</comment>
<comment type="subunit">
    <text evidence="1">Part of the 30S ribosomal subunit. Forms a tight heterodimer with protein bS6.</text>
</comment>
<comment type="similarity">
    <text evidence="1">Belongs to the bacterial ribosomal protein bS18 family.</text>
</comment>
<reference key="1">
    <citation type="journal article" date="2003" name="Nature">
        <title>The genome sequence of Bacillus anthracis Ames and comparison to closely related bacteria.</title>
        <authorList>
            <person name="Read T.D."/>
            <person name="Peterson S.N."/>
            <person name="Tourasse N.J."/>
            <person name="Baillie L.W."/>
            <person name="Paulsen I.T."/>
            <person name="Nelson K.E."/>
            <person name="Tettelin H."/>
            <person name="Fouts D.E."/>
            <person name="Eisen J.A."/>
            <person name="Gill S.R."/>
            <person name="Holtzapple E.K."/>
            <person name="Okstad O.A."/>
            <person name="Helgason E."/>
            <person name="Rilstone J."/>
            <person name="Wu M."/>
            <person name="Kolonay J.F."/>
            <person name="Beanan M.J."/>
            <person name="Dodson R.J."/>
            <person name="Brinkac L.M."/>
            <person name="Gwinn M.L."/>
            <person name="DeBoy R.T."/>
            <person name="Madpu R."/>
            <person name="Daugherty S.C."/>
            <person name="Durkin A.S."/>
            <person name="Haft D.H."/>
            <person name="Nelson W.C."/>
            <person name="Peterson J.D."/>
            <person name="Pop M."/>
            <person name="Khouri H.M."/>
            <person name="Radune D."/>
            <person name="Benton J.L."/>
            <person name="Mahamoud Y."/>
            <person name="Jiang L."/>
            <person name="Hance I.R."/>
            <person name="Weidman J.F."/>
            <person name="Berry K.J."/>
            <person name="Plaut R.D."/>
            <person name="Wolf A.M."/>
            <person name="Watkins K.L."/>
            <person name="Nierman W.C."/>
            <person name="Hazen A."/>
            <person name="Cline R.T."/>
            <person name="Redmond C."/>
            <person name="Thwaite J.E."/>
            <person name="White O."/>
            <person name="Salzberg S.L."/>
            <person name="Thomason B."/>
            <person name="Friedlander A.M."/>
            <person name="Koehler T.M."/>
            <person name="Hanna P.C."/>
            <person name="Kolstoe A.-B."/>
            <person name="Fraser C.M."/>
        </authorList>
    </citation>
    <scope>NUCLEOTIDE SEQUENCE [LARGE SCALE GENOMIC DNA]</scope>
    <source>
        <strain>Ames / isolate Porton</strain>
    </source>
</reference>
<reference key="2">
    <citation type="journal article" date="2009" name="J. Bacteriol.">
        <title>The complete genome sequence of Bacillus anthracis Ames 'Ancestor'.</title>
        <authorList>
            <person name="Ravel J."/>
            <person name="Jiang L."/>
            <person name="Stanley S.T."/>
            <person name="Wilson M.R."/>
            <person name="Decker R.S."/>
            <person name="Read T.D."/>
            <person name="Worsham P."/>
            <person name="Keim P.S."/>
            <person name="Salzberg S.L."/>
            <person name="Fraser-Liggett C.M."/>
            <person name="Rasko D.A."/>
        </authorList>
    </citation>
    <scope>NUCLEOTIDE SEQUENCE [LARGE SCALE GENOMIC DNA]</scope>
    <source>
        <strain>Ames ancestor</strain>
    </source>
</reference>
<reference key="3">
    <citation type="submission" date="2004-01" db="EMBL/GenBank/DDBJ databases">
        <title>Complete genome sequence of Bacillus anthracis Sterne.</title>
        <authorList>
            <person name="Brettin T.S."/>
            <person name="Bruce D."/>
            <person name="Challacombe J.F."/>
            <person name="Gilna P."/>
            <person name="Han C."/>
            <person name="Hill K."/>
            <person name="Hitchcock P."/>
            <person name="Jackson P."/>
            <person name="Keim P."/>
            <person name="Longmire J."/>
            <person name="Lucas S."/>
            <person name="Okinaka R."/>
            <person name="Richardson P."/>
            <person name="Rubin E."/>
            <person name="Tice H."/>
        </authorList>
    </citation>
    <scope>NUCLEOTIDE SEQUENCE [LARGE SCALE GENOMIC DNA]</scope>
    <source>
        <strain>Sterne</strain>
    </source>
</reference>
<sequence length="77" mass="8829">MAGRKGGRAKRRKVCFFTSNGITRIDYKDVDLLKRFVSERGKILPRRVTGTSAKYQRKLTVAIKRARQMALLPYVGE</sequence>
<protein>
    <recommendedName>
        <fullName evidence="1">Small ribosomal subunit protein bS18</fullName>
    </recommendedName>
    <alternativeName>
        <fullName evidence="2">30S ribosomal protein S18</fullName>
    </alternativeName>
</protein>